<feature type="peptide" id="PRO_0000044819" description="Peptide YY-like">
    <location>
        <begin position="1"/>
        <end position="36"/>
    </location>
</feature>
<feature type="modified residue" description="Tyrosine amide" evidence="1">
    <location>
        <position position="36"/>
    </location>
</feature>
<proteinExistence type="evidence at protein level"/>
<comment type="subcellular location">
    <subcellularLocation>
        <location>Secreted</location>
    </subcellularLocation>
</comment>
<comment type="similarity">
    <text evidence="2">Belongs to the NPY family.</text>
</comment>
<evidence type="ECO:0000269" key="1">
    <source>
    </source>
</evidence>
<evidence type="ECO:0000305" key="2"/>
<organism>
    <name type="scientific">Pelophylax ridibundus</name>
    <name type="common">Marsh frog</name>
    <name type="synonym">Rana ridibunda</name>
    <dbReference type="NCBI Taxonomy" id="8406"/>
    <lineage>
        <taxon>Eukaryota</taxon>
        <taxon>Metazoa</taxon>
        <taxon>Chordata</taxon>
        <taxon>Craniata</taxon>
        <taxon>Vertebrata</taxon>
        <taxon>Euteleostomi</taxon>
        <taxon>Amphibia</taxon>
        <taxon>Batrachia</taxon>
        <taxon>Anura</taxon>
        <taxon>Neobatrachia</taxon>
        <taxon>Ranoidea</taxon>
        <taxon>Ranidae</taxon>
        <taxon>Pelophylax</taxon>
    </lineage>
</organism>
<sequence>YPPKPENPGEDASPEEMTKYLTALRHYINLVTRQRY</sequence>
<dbReference type="SMR" id="P29204"/>
<dbReference type="GO" id="GO:0005615">
    <property type="term" value="C:extracellular space"/>
    <property type="evidence" value="ECO:0007669"/>
    <property type="project" value="TreeGrafter"/>
</dbReference>
<dbReference type="GO" id="GO:0005184">
    <property type="term" value="F:neuropeptide hormone activity"/>
    <property type="evidence" value="ECO:0007669"/>
    <property type="project" value="TreeGrafter"/>
</dbReference>
<dbReference type="GO" id="GO:0031841">
    <property type="term" value="F:neuropeptide Y receptor binding"/>
    <property type="evidence" value="ECO:0007669"/>
    <property type="project" value="TreeGrafter"/>
</dbReference>
<dbReference type="GO" id="GO:0007631">
    <property type="term" value="P:feeding behavior"/>
    <property type="evidence" value="ECO:0007669"/>
    <property type="project" value="TreeGrafter"/>
</dbReference>
<dbReference type="GO" id="GO:0007218">
    <property type="term" value="P:neuropeptide signaling pathway"/>
    <property type="evidence" value="ECO:0007669"/>
    <property type="project" value="TreeGrafter"/>
</dbReference>
<dbReference type="CDD" id="cd00126">
    <property type="entry name" value="PAH"/>
    <property type="match status" value="1"/>
</dbReference>
<dbReference type="Gene3D" id="6.10.250.900">
    <property type="match status" value="1"/>
</dbReference>
<dbReference type="InterPro" id="IPR001955">
    <property type="entry name" value="Pancreatic_hormone-like"/>
</dbReference>
<dbReference type="InterPro" id="IPR020392">
    <property type="entry name" value="Pancreatic_hormone-like_CS"/>
</dbReference>
<dbReference type="PANTHER" id="PTHR10533">
    <property type="entry name" value="NEUROPEPTIDE Y/PANCREATIC HORMONE/PEPTIDE YY"/>
    <property type="match status" value="1"/>
</dbReference>
<dbReference type="PANTHER" id="PTHR10533:SF14">
    <property type="entry name" value="PEPTIDE YY-RELATED"/>
    <property type="match status" value="1"/>
</dbReference>
<dbReference type="Pfam" id="PF00159">
    <property type="entry name" value="Hormone_3"/>
    <property type="match status" value="1"/>
</dbReference>
<dbReference type="PRINTS" id="PR00278">
    <property type="entry name" value="PANCHORMONE"/>
</dbReference>
<dbReference type="SMART" id="SM00309">
    <property type="entry name" value="PAH"/>
    <property type="match status" value="1"/>
</dbReference>
<dbReference type="PROSITE" id="PS00265">
    <property type="entry name" value="PANCREATIC_HORMONE_1"/>
    <property type="match status" value="1"/>
</dbReference>
<dbReference type="PROSITE" id="PS50276">
    <property type="entry name" value="PANCREATIC_HORMONE_2"/>
    <property type="match status" value="1"/>
</dbReference>
<protein>
    <recommendedName>
        <fullName>Peptide YY-like</fullName>
        <shortName>PYY</shortName>
    </recommendedName>
</protein>
<reference key="1">
    <citation type="journal article" date="1992" name="Peptides">
        <title>Primary structure of frog PYY: implications for the molecular evolution of the pancreatic polypeptide family.</title>
        <authorList>
            <person name="Conlon J.M."/>
            <person name="Chartrel N."/>
            <person name="Vaudry H."/>
        </authorList>
    </citation>
    <scope>PROTEIN SEQUENCE</scope>
    <scope>AMIDATION AT TYR-36</scope>
    <source>
        <tissue>Intestine</tissue>
    </source>
</reference>
<keyword id="KW-0027">Amidation</keyword>
<keyword id="KW-0903">Direct protein sequencing</keyword>
<keyword id="KW-0372">Hormone</keyword>
<keyword id="KW-0964">Secreted</keyword>
<name>PYY_PELRI</name>
<accession>P29204</accession>